<sequence length="581" mass="63776">MRTLLTILAAGSLLAHITEDTSDLLQHVKFQSSNFENILTWDGRPESPPDTVYSVQYKTYGEEEWLEKEGCQRITQKSCNLTMETSNLTELYYARVTATDGAGRSATKMTNRFSSLQHTSIKPPDVTCIPKVRSIQMIVHPTYTPIRAQNGHQLTLENIFQDLLYHLKLRINHTYQMHLEGKQREFEFVGLTPDTEFLGTIMICIPNLFKESTPYMCRVKTLPDRTWTYSFSGAFLFSLGFLVAGLCYLSYRYITKPPPPPSSLNVQHILPFRPLQFIQEHTLIPVFDLSGSGGLAQPVQYSEVKVSNPTEPPGPPPRHSLPEIAYLGQPDLPVLRPSGGPPHQALPVLSYAPQAAPEGRPSSYAPQGALEAKPPSYTPQAVSETQLPSYTPRATPDNWPPSYGMCGEGSGRDSPPVTRSGPKHLGTKGQLQKEVPAGSCSPTGLSLQEVTPLAMEDPQEAKSSHQCLRVHTDSDSDSDTIGQREPGTRSSLKGQLPLLSSVQIEGHPGCLPLQTPSLPCSPTDKGPSPWGLLESLVCPSDEDPVSKTEAESPGLQAPDLESPTELDSLFRGLALTVQWES</sequence>
<comment type="function">
    <text evidence="2">Component of the receptor for IL20, IL22 and IL24. Component of IL22 receptor formed by IL22RA1 and IL10RB enabling IL22 signaling via JAK/STAT pathways. IL22 also induces activation of MAPK1/MAPK3 and Akt kinases pathways. Component of one of the receptor for IL20 and IL24 formed by IL22RA1 and IL20RB also signaling through STATs activation. Mediates IL24 antiangiogenic activity as well as IL24 inhibitory effect on endothelial cell tube formation and differentiation.</text>
</comment>
<comment type="subunit">
    <text evidence="2">Heterodimer with IL10RB and with IL20RB (By similarity). Interacts with FBXW12; the interaction promotes ubiquitination of IL22RA1 (By similarity).</text>
</comment>
<comment type="subcellular location">
    <subcellularLocation>
        <location evidence="2">Cell membrane</location>
        <topology evidence="3">Single-pass type I membrane protein</topology>
    </subcellularLocation>
</comment>
<comment type="PTM">
    <text evidence="2">Ubiquitinated.</text>
</comment>
<comment type="similarity">
    <text evidence="5">Belongs to the type II cytokine receptor family.</text>
</comment>
<accession>Q3SYS8</accession>
<keyword id="KW-1003">Cell membrane</keyword>
<keyword id="KW-1015">Disulfide bond</keyword>
<keyword id="KW-0325">Glycoprotein</keyword>
<keyword id="KW-0472">Membrane</keyword>
<keyword id="KW-0597">Phosphoprotein</keyword>
<keyword id="KW-0675">Receptor</keyword>
<keyword id="KW-1185">Reference proteome</keyword>
<keyword id="KW-0677">Repeat</keyword>
<keyword id="KW-0732">Signal</keyword>
<keyword id="KW-0812">Transmembrane</keyword>
<keyword id="KW-1133">Transmembrane helix</keyword>
<keyword id="KW-0832">Ubl conjugation</keyword>
<name>I22R1_BOVIN</name>
<evidence type="ECO:0000250" key="1">
    <source>
        <dbReference type="UniProtKB" id="Q80XZ4"/>
    </source>
</evidence>
<evidence type="ECO:0000250" key="2">
    <source>
        <dbReference type="UniProtKB" id="Q8N6P7"/>
    </source>
</evidence>
<evidence type="ECO:0000255" key="3"/>
<evidence type="ECO:0000256" key="4">
    <source>
        <dbReference type="SAM" id="MobiDB-lite"/>
    </source>
</evidence>
<evidence type="ECO:0000305" key="5"/>
<feature type="signal peptide" evidence="3">
    <location>
        <begin position="1"/>
        <end position="15"/>
    </location>
</feature>
<feature type="chain" id="PRO_0000324319" description="Interleukin-22 receptor subunit alpha-1">
    <location>
        <begin position="16"/>
        <end position="581"/>
    </location>
</feature>
<feature type="topological domain" description="Extracellular" evidence="3">
    <location>
        <begin position="16"/>
        <end position="228"/>
    </location>
</feature>
<feature type="transmembrane region" description="Helical" evidence="3">
    <location>
        <begin position="229"/>
        <end position="249"/>
    </location>
</feature>
<feature type="topological domain" description="Cytoplasmic" evidence="3">
    <location>
        <begin position="250"/>
        <end position="581"/>
    </location>
</feature>
<feature type="domain" description="Fibronectin type-III 1">
    <location>
        <begin position="18"/>
        <end position="115"/>
    </location>
</feature>
<feature type="domain" description="Fibronectin type-III 2">
    <location>
        <begin position="141"/>
        <end position="221"/>
    </location>
</feature>
<feature type="region of interest" description="Disordered" evidence="4">
    <location>
        <begin position="354"/>
        <end position="493"/>
    </location>
</feature>
<feature type="region of interest" description="Disordered" evidence="4">
    <location>
        <begin position="539"/>
        <end position="563"/>
    </location>
</feature>
<feature type="compositionally biased region" description="Polar residues" evidence="4">
    <location>
        <begin position="378"/>
        <end position="389"/>
    </location>
</feature>
<feature type="compositionally biased region" description="Polar residues" evidence="4">
    <location>
        <begin position="440"/>
        <end position="449"/>
    </location>
</feature>
<feature type="modified residue" description="Phosphoserine" evidence="1">
    <location>
        <position position="410"/>
    </location>
</feature>
<feature type="modified residue" description="Phosphoserine" evidence="1">
    <location>
        <position position="414"/>
    </location>
</feature>
<feature type="glycosylation site" description="N-linked (GlcNAc...) asparagine" evidence="3">
    <location>
        <position position="80"/>
    </location>
</feature>
<feature type="disulfide bond" evidence="2">
    <location>
        <begin position="71"/>
        <end position="79"/>
    </location>
</feature>
<feature type="disulfide bond" evidence="2">
    <location>
        <begin position="128"/>
        <end position="217"/>
    </location>
</feature>
<gene>
    <name type="primary">IL22RA1</name>
</gene>
<dbReference type="EMBL" id="BC103413">
    <property type="protein sequence ID" value="AAI03414.1"/>
    <property type="molecule type" value="mRNA"/>
</dbReference>
<dbReference type="RefSeq" id="NP_001029483.1">
    <property type="nucleotide sequence ID" value="NM_001034311.2"/>
</dbReference>
<dbReference type="SMR" id="Q3SYS8"/>
<dbReference type="FunCoup" id="Q3SYS8">
    <property type="interactions" value="8"/>
</dbReference>
<dbReference type="STRING" id="9913.ENSBTAP00000001455"/>
<dbReference type="GlyCosmos" id="Q3SYS8">
    <property type="glycosylation" value="1 site, No reported glycans"/>
</dbReference>
<dbReference type="GlyGen" id="Q3SYS8">
    <property type="glycosylation" value="1 site"/>
</dbReference>
<dbReference type="PaxDb" id="9913-ENSBTAP00000001455"/>
<dbReference type="GeneID" id="508044"/>
<dbReference type="KEGG" id="bta:508044"/>
<dbReference type="CTD" id="58985"/>
<dbReference type="eggNOG" id="ENOG502S4IS">
    <property type="taxonomic scope" value="Eukaryota"/>
</dbReference>
<dbReference type="InParanoid" id="Q3SYS8"/>
<dbReference type="OrthoDB" id="9908819at2759"/>
<dbReference type="Proteomes" id="UP000009136">
    <property type="component" value="Unplaced"/>
</dbReference>
<dbReference type="GO" id="GO:0005886">
    <property type="term" value="C:plasma membrane"/>
    <property type="evidence" value="ECO:0000318"/>
    <property type="project" value="GO_Central"/>
</dbReference>
<dbReference type="GO" id="GO:0004896">
    <property type="term" value="F:cytokine receptor activity"/>
    <property type="evidence" value="ECO:0000318"/>
    <property type="project" value="GO_Central"/>
</dbReference>
<dbReference type="GO" id="GO:0019221">
    <property type="term" value="P:cytokine-mediated signaling pathway"/>
    <property type="evidence" value="ECO:0000318"/>
    <property type="project" value="GO_Central"/>
</dbReference>
<dbReference type="CDD" id="cd00063">
    <property type="entry name" value="FN3"/>
    <property type="match status" value="1"/>
</dbReference>
<dbReference type="FunFam" id="2.60.40.10:FF:000348">
    <property type="entry name" value="Interleukin 20 receptor subunit alpha"/>
    <property type="match status" value="1"/>
</dbReference>
<dbReference type="FunFam" id="2.60.40.10:FF:001465">
    <property type="entry name" value="Interleukin-22 receptor subunit alpha-1"/>
    <property type="match status" value="1"/>
</dbReference>
<dbReference type="Gene3D" id="2.60.40.10">
    <property type="entry name" value="Immunoglobulins"/>
    <property type="match status" value="2"/>
</dbReference>
<dbReference type="InterPro" id="IPR003961">
    <property type="entry name" value="FN3_dom"/>
</dbReference>
<dbReference type="InterPro" id="IPR036116">
    <property type="entry name" value="FN3_sf"/>
</dbReference>
<dbReference type="InterPro" id="IPR013783">
    <property type="entry name" value="Ig-like_fold"/>
</dbReference>
<dbReference type="InterPro" id="IPR015373">
    <property type="entry name" value="Interferon/interleukin_rcp_dom"/>
</dbReference>
<dbReference type="InterPro" id="IPR050650">
    <property type="entry name" value="Type-II_Cytokine-TF_Rcpt"/>
</dbReference>
<dbReference type="PANTHER" id="PTHR20859">
    <property type="entry name" value="INTERFERON/INTERLEUKIN RECEPTOR"/>
    <property type="match status" value="1"/>
</dbReference>
<dbReference type="PANTHER" id="PTHR20859:SF53">
    <property type="entry name" value="INTERLEUKIN-22 RECEPTOR SUBUNIT ALPHA-1"/>
    <property type="match status" value="1"/>
</dbReference>
<dbReference type="Pfam" id="PF09294">
    <property type="entry name" value="Interfer-bind"/>
    <property type="match status" value="1"/>
</dbReference>
<dbReference type="Pfam" id="PF01108">
    <property type="entry name" value="Tissue_fac"/>
    <property type="match status" value="1"/>
</dbReference>
<dbReference type="SUPFAM" id="SSF49265">
    <property type="entry name" value="Fibronectin type III"/>
    <property type="match status" value="2"/>
</dbReference>
<proteinExistence type="evidence at transcript level"/>
<protein>
    <recommendedName>
        <fullName>Interleukin-22 receptor subunit alpha-1</fullName>
        <shortName>IL-22 receptor subunit alpha-1</shortName>
        <shortName>IL-22R-alpha-1</shortName>
        <shortName>IL-22RA1</shortName>
    </recommendedName>
</protein>
<reference key="1">
    <citation type="submission" date="2005-08" db="EMBL/GenBank/DDBJ databases">
        <authorList>
            <consortium name="NIH - Mammalian Gene Collection (MGC) project"/>
        </authorList>
    </citation>
    <scope>NUCLEOTIDE SEQUENCE [LARGE SCALE MRNA]</scope>
</reference>
<organism>
    <name type="scientific">Bos taurus</name>
    <name type="common">Bovine</name>
    <dbReference type="NCBI Taxonomy" id="9913"/>
    <lineage>
        <taxon>Eukaryota</taxon>
        <taxon>Metazoa</taxon>
        <taxon>Chordata</taxon>
        <taxon>Craniata</taxon>
        <taxon>Vertebrata</taxon>
        <taxon>Euteleostomi</taxon>
        <taxon>Mammalia</taxon>
        <taxon>Eutheria</taxon>
        <taxon>Laurasiatheria</taxon>
        <taxon>Artiodactyla</taxon>
        <taxon>Ruminantia</taxon>
        <taxon>Pecora</taxon>
        <taxon>Bovidae</taxon>
        <taxon>Bovinae</taxon>
        <taxon>Bos</taxon>
    </lineage>
</organism>